<comment type="function">
    <text evidence="1">Catalyzes the synthesis of GMP from XMP.</text>
</comment>
<comment type="catalytic activity">
    <reaction evidence="1">
        <text>XMP + L-glutamine + ATP + H2O = GMP + L-glutamate + AMP + diphosphate + 2 H(+)</text>
        <dbReference type="Rhea" id="RHEA:11680"/>
        <dbReference type="ChEBI" id="CHEBI:15377"/>
        <dbReference type="ChEBI" id="CHEBI:15378"/>
        <dbReference type="ChEBI" id="CHEBI:29985"/>
        <dbReference type="ChEBI" id="CHEBI:30616"/>
        <dbReference type="ChEBI" id="CHEBI:33019"/>
        <dbReference type="ChEBI" id="CHEBI:57464"/>
        <dbReference type="ChEBI" id="CHEBI:58115"/>
        <dbReference type="ChEBI" id="CHEBI:58359"/>
        <dbReference type="ChEBI" id="CHEBI:456215"/>
        <dbReference type="EC" id="6.3.5.2"/>
    </reaction>
</comment>
<comment type="pathway">
    <text evidence="1">Purine metabolism; GMP biosynthesis; GMP from XMP (L-Gln route): step 1/1.</text>
</comment>
<comment type="subunit">
    <text evidence="1">Homodimer.</text>
</comment>
<name>GUAA_STRM5</name>
<feature type="chain" id="PRO_1000120426" description="GMP synthase [glutamine-hydrolyzing]">
    <location>
        <begin position="1"/>
        <end position="521"/>
    </location>
</feature>
<feature type="domain" description="Glutamine amidotransferase type-1" evidence="1">
    <location>
        <begin position="8"/>
        <end position="203"/>
    </location>
</feature>
<feature type="domain" description="GMPS ATP-PPase" evidence="1">
    <location>
        <begin position="204"/>
        <end position="396"/>
    </location>
</feature>
<feature type="active site" description="Nucleophile" evidence="1">
    <location>
        <position position="85"/>
    </location>
</feature>
<feature type="active site" evidence="1">
    <location>
        <position position="177"/>
    </location>
</feature>
<feature type="active site" evidence="1">
    <location>
        <position position="179"/>
    </location>
</feature>
<feature type="binding site" evidence="1">
    <location>
        <begin position="231"/>
        <end position="237"/>
    </location>
    <ligand>
        <name>ATP</name>
        <dbReference type="ChEBI" id="CHEBI:30616"/>
    </ligand>
</feature>
<evidence type="ECO:0000255" key="1">
    <source>
        <dbReference type="HAMAP-Rule" id="MF_00344"/>
    </source>
</evidence>
<gene>
    <name evidence="1" type="primary">guaA</name>
    <name type="ordered locus">Smal_1672</name>
</gene>
<reference key="1">
    <citation type="submission" date="2008-06" db="EMBL/GenBank/DDBJ databases">
        <title>Complete sequence of Stenotrophomonas maltophilia R551-3.</title>
        <authorList>
            <consortium name="US DOE Joint Genome Institute"/>
            <person name="Lucas S."/>
            <person name="Copeland A."/>
            <person name="Lapidus A."/>
            <person name="Glavina del Rio T."/>
            <person name="Dalin E."/>
            <person name="Tice H."/>
            <person name="Pitluck S."/>
            <person name="Chain P."/>
            <person name="Malfatti S."/>
            <person name="Shin M."/>
            <person name="Vergez L."/>
            <person name="Lang D."/>
            <person name="Schmutz J."/>
            <person name="Larimer F."/>
            <person name="Land M."/>
            <person name="Hauser L."/>
            <person name="Kyrpides N."/>
            <person name="Mikhailova N."/>
            <person name="Taghavi S."/>
            <person name="Monchy S."/>
            <person name="Newman L."/>
            <person name="Vangronsveld J."/>
            <person name="van der Lelie D."/>
            <person name="Richardson P."/>
        </authorList>
    </citation>
    <scope>NUCLEOTIDE SEQUENCE [LARGE SCALE GENOMIC DNA]</scope>
    <source>
        <strain>R551-3</strain>
    </source>
</reference>
<organism>
    <name type="scientific">Stenotrophomonas maltophilia (strain R551-3)</name>
    <dbReference type="NCBI Taxonomy" id="391008"/>
    <lineage>
        <taxon>Bacteria</taxon>
        <taxon>Pseudomonadati</taxon>
        <taxon>Pseudomonadota</taxon>
        <taxon>Gammaproteobacteria</taxon>
        <taxon>Lysobacterales</taxon>
        <taxon>Lysobacteraceae</taxon>
        <taxon>Stenotrophomonas</taxon>
        <taxon>Stenotrophomonas maltophilia group</taxon>
    </lineage>
</organism>
<dbReference type="EC" id="6.3.5.2" evidence="1"/>
<dbReference type="EMBL" id="CP001111">
    <property type="protein sequence ID" value="ACF51376.1"/>
    <property type="molecule type" value="Genomic_DNA"/>
</dbReference>
<dbReference type="RefSeq" id="WP_012510808.1">
    <property type="nucleotide sequence ID" value="NC_011071.1"/>
</dbReference>
<dbReference type="SMR" id="B4SSX7"/>
<dbReference type="STRING" id="391008.Smal_1672"/>
<dbReference type="MEROPS" id="C26.957"/>
<dbReference type="KEGG" id="smt:Smal_1672"/>
<dbReference type="eggNOG" id="COG0518">
    <property type="taxonomic scope" value="Bacteria"/>
</dbReference>
<dbReference type="eggNOG" id="COG0519">
    <property type="taxonomic scope" value="Bacteria"/>
</dbReference>
<dbReference type="HOGENOM" id="CLU_014340_0_5_6"/>
<dbReference type="OrthoDB" id="9802219at2"/>
<dbReference type="UniPathway" id="UPA00189">
    <property type="reaction ID" value="UER00296"/>
</dbReference>
<dbReference type="Proteomes" id="UP000001867">
    <property type="component" value="Chromosome"/>
</dbReference>
<dbReference type="GO" id="GO:0005829">
    <property type="term" value="C:cytosol"/>
    <property type="evidence" value="ECO:0007669"/>
    <property type="project" value="TreeGrafter"/>
</dbReference>
<dbReference type="GO" id="GO:0005524">
    <property type="term" value="F:ATP binding"/>
    <property type="evidence" value="ECO:0007669"/>
    <property type="project" value="UniProtKB-UniRule"/>
</dbReference>
<dbReference type="GO" id="GO:0003921">
    <property type="term" value="F:GMP synthase activity"/>
    <property type="evidence" value="ECO:0007669"/>
    <property type="project" value="InterPro"/>
</dbReference>
<dbReference type="CDD" id="cd01742">
    <property type="entry name" value="GATase1_GMP_Synthase"/>
    <property type="match status" value="1"/>
</dbReference>
<dbReference type="CDD" id="cd01997">
    <property type="entry name" value="GMP_synthase_C"/>
    <property type="match status" value="1"/>
</dbReference>
<dbReference type="FunFam" id="3.30.300.10:FF:000002">
    <property type="entry name" value="GMP synthase [glutamine-hydrolyzing]"/>
    <property type="match status" value="1"/>
</dbReference>
<dbReference type="FunFam" id="3.40.50.620:FF:000001">
    <property type="entry name" value="GMP synthase [glutamine-hydrolyzing]"/>
    <property type="match status" value="1"/>
</dbReference>
<dbReference type="FunFam" id="3.40.50.880:FF:000001">
    <property type="entry name" value="GMP synthase [glutamine-hydrolyzing]"/>
    <property type="match status" value="1"/>
</dbReference>
<dbReference type="Gene3D" id="3.30.300.10">
    <property type="match status" value="1"/>
</dbReference>
<dbReference type="Gene3D" id="3.40.50.880">
    <property type="match status" value="1"/>
</dbReference>
<dbReference type="Gene3D" id="3.40.50.620">
    <property type="entry name" value="HUPs"/>
    <property type="match status" value="1"/>
</dbReference>
<dbReference type="HAMAP" id="MF_00344">
    <property type="entry name" value="GMP_synthase"/>
    <property type="match status" value="1"/>
</dbReference>
<dbReference type="InterPro" id="IPR029062">
    <property type="entry name" value="Class_I_gatase-like"/>
</dbReference>
<dbReference type="InterPro" id="IPR017926">
    <property type="entry name" value="GATASE"/>
</dbReference>
<dbReference type="InterPro" id="IPR001674">
    <property type="entry name" value="GMP_synth_C"/>
</dbReference>
<dbReference type="InterPro" id="IPR004739">
    <property type="entry name" value="GMP_synth_GATase"/>
</dbReference>
<dbReference type="InterPro" id="IPR022955">
    <property type="entry name" value="GMP_synthase"/>
</dbReference>
<dbReference type="InterPro" id="IPR025777">
    <property type="entry name" value="GMPS_ATP_PPase_dom"/>
</dbReference>
<dbReference type="InterPro" id="IPR022310">
    <property type="entry name" value="NAD/GMP_synthase"/>
</dbReference>
<dbReference type="InterPro" id="IPR014729">
    <property type="entry name" value="Rossmann-like_a/b/a_fold"/>
</dbReference>
<dbReference type="NCBIfam" id="TIGR00884">
    <property type="entry name" value="guaA_Cterm"/>
    <property type="match status" value="1"/>
</dbReference>
<dbReference type="NCBIfam" id="TIGR00888">
    <property type="entry name" value="guaA_Nterm"/>
    <property type="match status" value="1"/>
</dbReference>
<dbReference type="NCBIfam" id="NF000848">
    <property type="entry name" value="PRK00074.1"/>
    <property type="match status" value="1"/>
</dbReference>
<dbReference type="PANTHER" id="PTHR11922:SF2">
    <property type="entry name" value="GMP SYNTHASE [GLUTAMINE-HYDROLYZING]"/>
    <property type="match status" value="1"/>
</dbReference>
<dbReference type="PANTHER" id="PTHR11922">
    <property type="entry name" value="GMP SYNTHASE-RELATED"/>
    <property type="match status" value="1"/>
</dbReference>
<dbReference type="Pfam" id="PF00117">
    <property type="entry name" value="GATase"/>
    <property type="match status" value="1"/>
</dbReference>
<dbReference type="Pfam" id="PF00958">
    <property type="entry name" value="GMP_synt_C"/>
    <property type="match status" value="1"/>
</dbReference>
<dbReference type="Pfam" id="PF02540">
    <property type="entry name" value="NAD_synthase"/>
    <property type="match status" value="1"/>
</dbReference>
<dbReference type="PRINTS" id="PR00097">
    <property type="entry name" value="ANTSNTHASEII"/>
</dbReference>
<dbReference type="PRINTS" id="PR00099">
    <property type="entry name" value="CPSGATASE"/>
</dbReference>
<dbReference type="PRINTS" id="PR00096">
    <property type="entry name" value="GATASE"/>
</dbReference>
<dbReference type="SUPFAM" id="SSF52402">
    <property type="entry name" value="Adenine nucleotide alpha hydrolases-like"/>
    <property type="match status" value="1"/>
</dbReference>
<dbReference type="SUPFAM" id="SSF52317">
    <property type="entry name" value="Class I glutamine amidotransferase-like"/>
    <property type="match status" value="1"/>
</dbReference>
<dbReference type="SUPFAM" id="SSF54810">
    <property type="entry name" value="GMP synthetase C-terminal dimerisation domain"/>
    <property type="match status" value="1"/>
</dbReference>
<dbReference type="PROSITE" id="PS51273">
    <property type="entry name" value="GATASE_TYPE_1"/>
    <property type="match status" value="1"/>
</dbReference>
<dbReference type="PROSITE" id="PS51553">
    <property type="entry name" value="GMPS_ATP_PPASE"/>
    <property type="match status" value="1"/>
</dbReference>
<protein>
    <recommendedName>
        <fullName evidence="1">GMP synthase [glutamine-hydrolyzing]</fullName>
        <ecNumber evidence="1">6.3.5.2</ecNumber>
    </recommendedName>
    <alternativeName>
        <fullName evidence="1">GMP synthetase</fullName>
    </alternativeName>
    <alternativeName>
        <fullName evidence="1">Glutamine amidotransferase</fullName>
    </alternativeName>
</protein>
<keyword id="KW-0067">ATP-binding</keyword>
<keyword id="KW-0315">Glutamine amidotransferase</keyword>
<keyword id="KW-0332">GMP biosynthesis</keyword>
<keyword id="KW-0436">Ligase</keyword>
<keyword id="KW-0547">Nucleotide-binding</keyword>
<keyword id="KW-0658">Purine biosynthesis</keyword>
<accession>B4SSX7</accession>
<sequence length="521" mass="57203">MTNIHNDKILILDFGAQYTQLIARRIRELGVYCEIWAWDHNPAEIAGFGAKGIILSGGPESTTLPGAPAAPQEVFDSGLPIFGICYGMQTLAAQLGGATEAADQREFGHAEVNVINPDALFKGLSDHGGEPKLNVWMSHGDHVSVAPPGFTITATTDRIPVAAMANEEKRWYGVQFHPEVTHTLQGQALLRRFVVDVCGCQTLWTAANIIDDQITRVREQVGDDEVILGLSGGVDSSVVAALLHKAIGEKLTCVFVDTGLLRWQEGDQVMAMFAEHMGVKVVRVNAADRYFAALEGVSDPEAKRKIIGNLFVEIFDEESNKLKNAKWLAQGTIYPDVIESAGSKTGKAHVIKSHHNVGGLPEHMKLGLVEPLRELFKDEVRRLGVELGLPRTMVYRHPFPGPGLGVRILGEVKREYAELLAKADAIFIDELRKADLYDKTSQAFAVFLPVKSVGVVGDARAYEWVIALRAVETIDFMTAHWAHLPYEFLGTVSNRIINELRGVSRVVYDISGKPPATIEWE</sequence>
<proteinExistence type="inferred from homology"/>